<sequence>MPVAKDNQFWDALMENKVAKKLIKKHKCKAKCENIDDLANRYEVSKQEVEKVFKIFQLMDDDGSGTISSSEVAKMLNELGIDVSPKVVQAVMRSSDVSGDGQIDFEEFLAAVTSKIKLSTVKADVQLMLSKIDNNPEKVISAEELVVAWSETVSTNITVKEACALIQQADTQGRGKATIHEFITMCQTV</sequence>
<reference key="1">
    <citation type="journal article" date="1994" name="Nature">
        <title>2.2 Mb of contiguous nucleotide sequence from chromosome III of C. elegans.</title>
        <authorList>
            <person name="Wilson R."/>
            <person name="Ainscough R."/>
            <person name="Anderson K."/>
            <person name="Baynes C."/>
            <person name="Berks M."/>
            <person name="Bonfield J."/>
            <person name="Burton J."/>
            <person name="Connell M."/>
            <person name="Copsey T."/>
            <person name="Cooper J."/>
            <person name="Coulson A."/>
            <person name="Craxton M."/>
            <person name="Dear S."/>
            <person name="Du Z."/>
            <person name="Durbin R."/>
            <person name="Favello A."/>
            <person name="Fraser A."/>
            <person name="Fulton L."/>
            <person name="Gardner A."/>
            <person name="Green P."/>
            <person name="Hawkins T."/>
            <person name="Hillier L."/>
            <person name="Jier M."/>
            <person name="Johnston L."/>
            <person name="Jones M."/>
            <person name="Kershaw J."/>
            <person name="Kirsten J."/>
            <person name="Laisster N."/>
            <person name="Latreille P."/>
            <person name="Lightning J."/>
            <person name="Lloyd C."/>
            <person name="Mortimore B."/>
            <person name="O'Callaghan M."/>
            <person name="Parsons J."/>
            <person name="Percy C."/>
            <person name="Rifken L."/>
            <person name="Roopra A."/>
            <person name="Saunders D."/>
            <person name="Shownkeen R."/>
            <person name="Sims M."/>
            <person name="Smaldon N."/>
            <person name="Smith A."/>
            <person name="Smith M."/>
            <person name="Sonnhammer E."/>
            <person name="Staden R."/>
            <person name="Sulston J."/>
            <person name="Thierry-Mieg J."/>
            <person name="Thomas K."/>
            <person name="Vaudin M."/>
            <person name="Vaughan K."/>
            <person name="Waterston R."/>
            <person name="Watson A."/>
            <person name="Weinstock L."/>
            <person name="Wilkinson-Sproat J."/>
            <person name="Wohldman P."/>
        </authorList>
    </citation>
    <scope>NUCLEOTIDE SEQUENCE [LARGE SCALE GENOMIC DNA]</scope>
    <source>
        <strain>Bristol N2</strain>
    </source>
</reference>
<reference key="2">
    <citation type="journal article" date="1998" name="Science">
        <title>Genome sequence of the nematode C. elegans: a platform for investigating biology.</title>
        <authorList>
            <consortium name="The C. elegans sequencing consortium"/>
        </authorList>
    </citation>
    <scope>NUCLEOTIDE SEQUENCE [LARGE SCALE GENOMIC DNA]</scope>
    <source>
        <strain>Bristol N2</strain>
    </source>
</reference>
<protein>
    <recommendedName>
        <fullName>Uncharacterized calcium-binding protein C50C3.5</fullName>
    </recommendedName>
</protein>
<evidence type="ECO:0000255" key="1"/>
<evidence type="ECO:0000255" key="2">
    <source>
        <dbReference type="PROSITE-ProRule" id="PRU00448"/>
    </source>
</evidence>
<keyword id="KW-0106">Calcium</keyword>
<keyword id="KW-0175">Coiled coil</keyword>
<keyword id="KW-0479">Metal-binding</keyword>
<keyword id="KW-1185">Reference proteome</keyword>
<keyword id="KW-0677">Repeat</keyword>
<accession>P34368</accession>
<proteinExistence type="predicted"/>
<dbReference type="EMBL" id="FO080718">
    <property type="protein sequence ID" value="CCD66130.1"/>
    <property type="molecule type" value="Genomic_DNA"/>
</dbReference>
<dbReference type="PIR" id="S44624">
    <property type="entry name" value="S44624"/>
</dbReference>
<dbReference type="RefSeq" id="NP_498786.3">
    <property type="nucleotide sequence ID" value="NM_066385.4"/>
</dbReference>
<dbReference type="SMR" id="P34368"/>
<dbReference type="STRING" id="6239.C50C3.5.1"/>
<dbReference type="PaxDb" id="6239-C50C3.5"/>
<dbReference type="EnsemblMetazoa" id="C50C3.5.1">
    <property type="protein sequence ID" value="C50C3.5.1"/>
    <property type="gene ID" value="WBGene00016801"/>
</dbReference>
<dbReference type="GeneID" id="183642"/>
<dbReference type="KEGG" id="cel:CELE_C50C3.5"/>
<dbReference type="UCSC" id="C50C3.5">
    <property type="organism name" value="c. elegans"/>
</dbReference>
<dbReference type="AGR" id="WB:WBGene00016801"/>
<dbReference type="CTD" id="183642"/>
<dbReference type="WormBase" id="C50C3.5">
    <property type="protein sequence ID" value="CE46493"/>
    <property type="gene ID" value="WBGene00016801"/>
</dbReference>
<dbReference type="eggNOG" id="KOG0027">
    <property type="taxonomic scope" value="Eukaryota"/>
</dbReference>
<dbReference type="GeneTree" id="ENSGT00390000000717"/>
<dbReference type="HOGENOM" id="CLU_1435624_0_0_1"/>
<dbReference type="InParanoid" id="P34368"/>
<dbReference type="OMA" id="HEFITMC"/>
<dbReference type="OrthoDB" id="26525at2759"/>
<dbReference type="PhylomeDB" id="P34368"/>
<dbReference type="PRO" id="PR:P34368"/>
<dbReference type="Proteomes" id="UP000001940">
    <property type="component" value="Chromosome III"/>
</dbReference>
<dbReference type="Bgee" id="WBGene00016801">
    <property type="expression patterns" value="Expressed in larva and 4 other cell types or tissues"/>
</dbReference>
<dbReference type="GO" id="GO:0005509">
    <property type="term" value="F:calcium ion binding"/>
    <property type="evidence" value="ECO:0007669"/>
    <property type="project" value="InterPro"/>
</dbReference>
<dbReference type="CDD" id="cd00051">
    <property type="entry name" value="EFh"/>
    <property type="match status" value="1"/>
</dbReference>
<dbReference type="FunFam" id="1.10.238.10:FF:000178">
    <property type="entry name" value="Calmodulin-2 A"/>
    <property type="match status" value="1"/>
</dbReference>
<dbReference type="Gene3D" id="1.10.238.10">
    <property type="entry name" value="EF-hand"/>
    <property type="match status" value="1"/>
</dbReference>
<dbReference type="InterPro" id="IPR050145">
    <property type="entry name" value="Centrin_CML-like"/>
</dbReference>
<dbReference type="InterPro" id="IPR011992">
    <property type="entry name" value="EF-hand-dom_pair"/>
</dbReference>
<dbReference type="InterPro" id="IPR018247">
    <property type="entry name" value="EF_Hand_1_Ca_BS"/>
</dbReference>
<dbReference type="InterPro" id="IPR002048">
    <property type="entry name" value="EF_hand_dom"/>
</dbReference>
<dbReference type="PANTHER" id="PTHR23050">
    <property type="entry name" value="CALCIUM BINDING PROTEIN"/>
    <property type="match status" value="1"/>
</dbReference>
<dbReference type="Pfam" id="PF13499">
    <property type="entry name" value="EF-hand_7"/>
    <property type="match status" value="1"/>
</dbReference>
<dbReference type="Pfam" id="PF13833">
    <property type="entry name" value="EF-hand_8"/>
    <property type="match status" value="1"/>
</dbReference>
<dbReference type="SMART" id="SM00054">
    <property type="entry name" value="EFh"/>
    <property type="match status" value="3"/>
</dbReference>
<dbReference type="SUPFAM" id="SSF47473">
    <property type="entry name" value="EF-hand"/>
    <property type="match status" value="1"/>
</dbReference>
<dbReference type="PROSITE" id="PS00018">
    <property type="entry name" value="EF_HAND_1"/>
    <property type="match status" value="3"/>
</dbReference>
<dbReference type="PROSITE" id="PS50222">
    <property type="entry name" value="EF_HAND_2"/>
    <property type="match status" value="4"/>
</dbReference>
<feature type="chain" id="PRO_0000073839" description="Uncharacterized calcium-binding protein C50C3.5">
    <location>
        <begin position="1"/>
        <end position="189"/>
    </location>
</feature>
<feature type="domain" description="EF-hand 1" evidence="2">
    <location>
        <begin position="47"/>
        <end position="82"/>
    </location>
</feature>
<feature type="domain" description="EF-hand 2" evidence="2">
    <location>
        <begin position="83"/>
        <end position="118"/>
    </location>
</feature>
<feature type="domain" description="EF-hand 3" evidence="2">
    <location>
        <begin position="120"/>
        <end position="155"/>
    </location>
</feature>
<feature type="domain" description="EF-hand 4" evidence="2">
    <location>
        <begin position="157"/>
        <end position="189"/>
    </location>
</feature>
<feature type="coiled-coil region" evidence="1">
    <location>
        <begin position="31"/>
        <end position="54"/>
    </location>
</feature>
<feature type="binding site" evidence="2">
    <location>
        <position position="60"/>
    </location>
    <ligand>
        <name>Ca(2+)</name>
        <dbReference type="ChEBI" id="CHEBI:29108"/>
        <label>1</label>
    </ligand>
</feature>
<feature type="binding site" evidence="2">
    <location>
        <position position="62"/>
    </location>
    <ligand>
        <name>Ca(2+)</name>
        <dbReference type="ChEBI" id="CHEBI:29108"/>
        <label>1</label>
    </ligand>
</feature>
<feature type="binding site" evidence="2">
    <location>
        <position position="64"/>
    </location>
    <ligand>
        <name>Ca(2+)</name>
        <dbReference type="ChEBI" id="CHEBI:29108"/>
        <label>1</label>
    </ligand>
</feature>
<feature type="binding site" evidence="2">
    <location>
        <position position="66"/>
    </location>
    <ligand>
        <name>Ca(2+)</name>
        <dbReference type="ChEBI" id="CHEBI:29108"/>
        <label>1</label>
    </ligand>
</feature>
<feature type="binding site" evidence="2">
    <location>
        <position position="71"/>
    </location>
    <ligand>
        <name>Ca(2+)</name>
        <dbReference type="ChEBI" id="CHEBI:29108"/>
        <label>1</label>
    </ligand>
</feature>
<feature type="binding site" evidence="2">
    <location>
        <position position="96"/>
    </location>
    <ligand>
        <name>Ca(2+)</name>
        <dbReference type="ChEBI" id="CHEBI:29108"/>
        <label>2</label>
    </ligand>
</feature>
<feature type="binding site" evidence="2">
    <location>
        <position position="98"/>
    </location>
    <ligand>
        <name>Ca(2+)</name>
        <dbReference type="ChEBI" id="CHEBI:29108"/>
        <label>2</label>
    </ligand>
</feature>
<feature type="binding site" evidence="2">
    <location>
        <position position="100"/>
    </location>
    <ligand>
        <name>Ca(2+)</name>
        <dbReference type="ChEBI" id="CHEBI:29108"/>
        <label>2</label>
    </ligand>
</feature>
<feature type="binding site" evidence="2">
    <location>
        <position position="102"/>
    </location>
    <ligand>
        <name>Ca(2+)</name>
        <dbReference type="ChEBI" id="CHEBI:29108"/>
        <label>2</label>
    </ligand>
</feature>
<feature type="binding site" evidence="2">
    <location>
        <position position="107"/>
    </location>
    <ligand>
        <name>Ca(2+)</name>
        <dbReference type="ChEBI" id="CHEBI:29108"/>
        <label>2</label>
    </ligand>
</feature>
<feature type="binding site" evidence="2">
    <location>
        <position position="133"/>
    </location>
    <ligand>
        <name>Ca(2+)</name>
        <dbReference type="ChEBI" id="CHEBI:29108"/>
        <label>3</label>
    </ligand>
</feature>
<feature type="binding site" evidence="2">
    <location>
        <position position="135"/>
    </location>
    <ligand>
        <name>Ca(2+)</name>
        <dbReference type="ChEBI" id="CHEBI:29108"/>
        <label>3</label>
    </ligand>
</feature>
<feature type="binding site" evidence="2">
    <location>
        <position position="137"/>
    </location>
    <ligand>
        <name>Ca(2+)</name>
        <dbReference type="ChEBI" id="CHEBI:29108"/>
        <label>3</label>
    </ligand>
</feature>
<feature type="binding site" evidence="2">
    <location>
        <position position="144"/>
    </location>
    <ligand>
        <name>Ca(2+)</name>
        <dbReference type="ChEBI" id="CHEBI:29108"/>
        <label>3</label>
    </ligand>
</feature>
<gene>
    <name type="ORF">C50C3.5</name>
</gene>
<organism>
    <name type="scientific">Caenorhabditis elegans</name>
    <dbReference type="NCBI Taxonomy" id="6239"/>
    <lineage>
        <taxon>Eukaryota</taxon>
        <taxon>Metazoa</taxon>
        <taxon>Ecdysozoa</taxon>
        <taxon>Nematoda</taxon>
        <taxon>Chromadorea</taxon>
        <taxon>Rhabditida</taxon>
        <taxon>Rhabditina</taxon>
        <taxon>Rhabditomorpha</taxon>
        <taxon>Rhabditoidea</taxon>
        <taxon>Rhabditidae</taxon>
        <taxon>Peloderinae</taxon>
        <taxon>Caenorhabditis</taxon>
    </lineage>
</organism>
<name>YLJ5_CAEEL</name>